<feature type="chain" id="PRO_1000128241" description="4-hydroxythreonine-4-phosphate dehydrogenase">
    <location>
        <begin position="1"/>
        <end position="329"/>
    </location>
</feature>
<feature type="binding site" evidence="1">
    <location>
        <position position="136"/>
    </location>
    <ligand>
        <name>substrate</name>
    </ligand>
</feature>
<feature type="binding site" evidence="1">
    <location>
        <position position="137"/>
    </location>
    <ligand>
        <name>substrate</name>
    </ligand>
</feature>
<feature type="binding site" evidence="1">
    <location>
        <position position="166"/>
    </location>
    <ligand>
        <name>a divalent metal cation</name>
        <dbReference type="ChEBI" id="CHEBI:60240"/>
        <note>ligand shared between dimeric partners</note>
    </ligand>
</feature>
<feature type="binding site" evidence="1">
    <location>
        <position position="211"/>
    </location>
    <ligand>
        <name>a divalent metal cation</name>
        <dbReference type="ChEBI" id="CHEBI:60240"/>
        <note>ligand shared between dimeric partners</note>
    </ligand>
</feature>
<feature type="binding site" evidence="1">
    <location>
        <position position="266"/>
    </location>
    <ligand>
        <name>a divalent metal cation</name>
        <dbReference type="ChEBI" id="CHEBI:60240"/>
        <note>ligand shared between dimeric partners</note>
    </ligand>
</feature>
<feature type="binding site" evidence="1">
    <location>
        <position position="274"/>
    </location>
    <ligand>
        <name>substrate</name>
    </ligand>
</feature>
<feature type="binding site" evidence="1">
    <location>
        <position position="283"/>
    </location>
    <ligand>
        <name>substrate</name>
    </ligand>
</feature>
<feature type="binding site" evidence="1">
    <location>
        <position position="292"/>
    </location>
    <ligand>
        <name>substrate</name>
    </ligand>
</feature>
<protein>
    <recommendedName>
        <fullName evidence="1">4-hydroxythreonine-4-phosphate dehydrogenase</fullName>
        <ecNumber evidence="1">1.1.1.262</ecNumber>
    </recommendedName>
    <alternativeName>
        <fullName evidence="1">4-(phosphohydroxy)-L-threonine dehydrogenase</fullName>
    </alternativeName>
</protein>
<keyword id="KW-0170">Cobalt</keyword>
<keyword id="KW-0963">Cytoplasm</keyword>
<keyword id="KW-0460">Magnesium</keyword>
<keyword id="KW-0479">Metal-binding</keyword>
<keyword id="KW-0520">NAD</keyword>
<keyword id="KW-0521">NADP</keyword>
<keyword id="KW-0560">Oxidoreductase</keyword>
<keyword id="KW-0664">Pyridoxine biosynthesis</keyword>
<keyword id="KW-0862">Zinc</keyword>
<organism>
    <name type="scientific">Escherichia coli O157:H7 (strain EC4115 / EHEC)</name>
    <dbReference type="NCBI Taxonomy" id="444450"/>
    <lineage>
        <taxon>Bacteria</taxon>
        <taxon>Pseudomonadati</taxon>
        <taxon>Pseudomonadota</taxon>
        <taxon>Gammaproteobacteria</taxon>
        <taxon>Enterobacterales</taxon>
        <taxon>Enterobacteriaceae</taxon>
        <taxon>Escherichia</taxon>
    </lineage>
</organism>
<dbReference type="EC" id="1.1.1.262" evidence="1"/>
<dbReference type="EMBL" id="CP001164">
    <property type="protein sequence ID" value="ACI37882.1"/>
    <property type="molecule type" value="Genomic_DNA"/>
</dbReference>
<dbReference type="RefSeq" id="WP_000241259.1">
    <property type="nucleotide sequence ID" value="NC_011353.1"/>
</dbReference>
<dbReference type="SMR" id="B5YZ90"/>
<dbReference type="KEGG" id="ecf:ECH74115_0058"/>
<dbReference type="HOGENOM" id="CLU_040168_1_0_6"/>
<dbReference type="UniPathway" id="UPA00244">
    <property type="reaction ID" value="UER00312"/>
</dbReference>
<dbReference type="GO" id="GO:0005737">
    <property type="term" value="C:cytoplasm"/>
    <property type="evidence" value="ECO:0007669"/>
    <property type="project" value="UniProtKB-SubCell"/>
</dbReference>
<dbReference type="GO" id="GO:0050570">
    <property type="term" value="F:4-hydroxythreonine-4-phosphate dehydrogenase activity"/>
    <property type="evidence" value="ECO:0007669"/>
    <property type="project" value="UniProtKB-UniRule"/>
</dbReference>
<dbReference type="GO" id="GO:0050897">
    <property type="term" value="F:cobalt ion binding"/>
    <property type="evidence" value="ECO:0007669"/>
    <property type="project" value="UniProtKB-UniRule"/>
</dbReference>
<dbReference type="GO" id="GO:0000287">
    <property type="term" value="F:magnesium ion binding"/>
    <property type="evidence" value="ECO:0007669"/>
    <property type="project" value="UniProtKB-UniRule"/>
</dbReference>
<dbReference type="GO" id="GO:0051287">
    <property type="term" value="F:NAD binding"/>
    <property type="evidence" value="ECO:0007669"/>
    <property type="project" value="InterPro"/>
</dbReference>
<dbReference type="GO" id="GO:0008270">
    <property type="term" value="F:zinc ion binding"/>
    <property type="evidence" value="ECO:0007669"/>
    <property type="project" value="UniProtKB-UniRule"/>
</dbReference>
<dbReference type="GO" id="GO:0042823">
    <property type="term" value="P:pyridoxal phosphate biosynthetic process"/>
    <property type="evidence" value="ECO:0007669"/>
    <property type="project" value="UniProtKB-UniRule"/>
</dbReference>
<dbReference type="GO" id="GO:0008615">
    <property type="term" value="P:pyridoxine biosynthetic process"/>
    <property type="evidence" value="ECO:0007669"/>
    <property type="project" value="UniProtKB-UniRule"/>
</dbReference>
<dbReference type="FunFam" id="3.40.718.10:FF:000010">
    <property type="entry name" value="4-hydroxythreonine-4-phosphate dehydrogenase"/>
    <property type="match status" value="1"/>
</dbReference>
<dbReference type="Gene3D" id="3.40.718.10">
    <property type="entry name" value="Isopropylmalate Dehydrogenase"/>
    <property type="match status" value="1"/>
</dbReference>
<dbReference type="HAMAP" id="MF_00536">
    <property type="entry name" value="PdxA"/>
    <property type="match status" value="1"/>
</dbReference>
<dbReference type="InterPro" id="IPR037510">
    <property type="entry name" value="PdxA"/>
</dbReference>
<dbReference type="InterPro" id="IPR005255">
    <property type="entry name" value="PdxA_fam"/>
</dbReference>
<dbReference type="NCBIfam" id="TIGR00557">
    <property type="entry name" value="pdxA"/>
    <property type="match status" value="1"/>
</dbReference>
<dbReference type="PANTHER" id="PTHR30004">
    <property type="entry name" value="4-HYDROXYTHREONINE-4-PHOSPHATE DEHYDROGENASE"/>
    <property type="match status" value="1"/>
</dbReference>
<dbReference type="PANTHER" id="PTHR30004:SF5">
    <property type="entry name" value="4-HYDROXYTHREONINE-4-PHOSPHATE DEHYDROGENASE"/>
    <property type="match status" value="1"/>
</dbReference>
<dbReference type="Pfam" id="PF04166">
    <property type="entry name" value="PdxA"/>
    <property type="match status" value="1"/>
</dbReference>
<dbReference type="SUPFAM" id="SSF53659">
    <property type="entry name" value="Isocitrate/Isopropylmalate dehydrogenase-like"/>
    <property type="match status" value="1"/>
</dbReference>
<accession>B5YZ90</accession>
<name>PDXA_ECO5E</name>
<comment type="function">
    <text evidence="1">Catalyzes the NAD(P)-dependent oxidation of 4-(phosphooxy)-L-threonine (HTP) into 2-amino-3-oxo-4-(phosphooxy)butyric acid which spontaneously decarboxylates to form 3-amino-2-oxopropyl phosphate (AHAP).</text>
</comment>
<comment type="catalytic activity">
    <reaction evidence="1">
        <text>4-(phosphooxy)-L-threonine + NAD(+) = 3-amino-2-oxopropyl phosphate + CO2 + NADH</text>
        <dbReference type="Rhea" id="RHEA:32275"/>
        <dbReference type="ChEBI" id="CHEBI:16526"/>
        <dbReference type="ChEBI" id="CHEBI:57279"/>
        <dbReference type="ChEBI" id="CHEBI:57540"/>
        <dbReference type="ChEBI" id="CHEBI:57945"/>
        <dbReference type="ChEBI" id="CHEBI:58452"/>
        <dbReference type="EC" id="1.1.1.262"/>
    </reaction>
</comment>
<comment type="cofactor">
    <cofactor evidence="1">
        <name>Zn(2+)</name>
        <dbReference type="ChEBI" id="CHEBI:29105"/>
    </cofactor>
    <cofactor evidence="1">
        <name>Mg(2+)</name>
        <dbReference type="ChEBI" id="CHEBI:18420"/>
    </cofactor>
    <cofactor evidence="1">
        <name>Co(2+)</name>
        <dbReference type="ChEBI" id="CHEBI:48828"/>
    </cofactor>
    <text evidence="1">Binds 1 divalent metal cation per subunit. Can use ions such as Zn(2+), Mg(2+) or Co(2+).</text>
</comment>
<comment type="pathway">
    <text evidence="1">Cofactor biosynthesis; pyridoxine 5'-phosphate biosynthesis; pyridoxine 5'-phosphate from D-erythrose 4-phosphate: step 4/5.</text>
</comment>
<comment type="subunit">
    <text evidence="1">Homodimer.</text>
</comment>
<comment type="subcellular location">
    <subcellularLocation>
        <location evidence="1">Cytoplasm</location>
    </subcellularLocation>
</comment>
<comment type="miscellaneous">
    <text evidence="1">The active site is located at the dimer interface.</text>
</comment>
<comment type="similarity">
    <text evidence="1">Belongs to the PdxA family.</text>
</comment>
<reference key="1">
    <citation type="journal article" date="2011" name="Proc. Natl. Acad. Sci. U.S.A.">
        <title>Genomic anatomy of Escherichia coli O157:H7 outbreaks.</title>
        <authorList>
            <person name="Eppinger M."/>
            <person name="Mammel M.K."/>
            <person name="Leclerc J.E."/>
            <person name="Ravel J."/>
            <person name="Cebula T.A."/>
        </authorList>
    </citation>
    <scope>NUCLEOTIDE SEQUENCE [LARGE SCALE GENOMIC DNA]</scope>
    <source>
        <strain>EC4115 / EHEC</strain>
    </source>
</reference>
<evidence type="ECO:0000255" key="1">
    <source>
        <dbReference type="HAMAP-Rule" id="MF_00536"/>
    </source>
</evidence>
<proteinExistence type="inferred from homology"/>
<gene>
    <name evidence="1" type="primary">pdxA</name>
    <name type="ordered locus">ECH74115_0058</name>
</gene>
<sequence>MVKTQRVVITPGEPAGIGPDLVVQLAQREWPVELVVCADATLLTDRAAMLGLPLTLRPYSPNSPAQPQTTGTLTLLPVALRESVTAGQLAIENGHYVVETLARACDGCLNGEFAALITGPVHKGVINDAGIPFTGHTEFFEERSQAKKVVMMLATEELRVALATTHLPLRDIADAITPALLHEVIAILHHDLRTKFGIAEPRILVCGLNPHAGEGGHMGTEEIDTIIPVLDELRAQGMKLNGPLPADTLFQPKYLDNADAVLAMYHDQGLPVLKYQGFGRGVNITLGLPFIRTSVDHGTALELAGRGEADVGSFITALNLAIKMIVNTQ</sequence>